<reference key="1">
    <citation type="journal article" date="2007" name="Nat. Biotechnol.">
        <title>Genome sequencing and analysis of the versatile cell factory Aspergillus niger CBS 513.88.</title>
        <authorList>
            <person name="Pel H.J."/>
            <person name="de Winde J.H."/>
            <person name="Archer D.B."/>
            <person name="Dyer P.S."/>
            <person name="Hofmann G."/>
            <person name="Schaap P.J."/>
            <person name="Turner G."/>
            <person name="de Vries R.P."/>
            <person name="Albang R."/>
            <person name="Albermann K."/>
            <person name="Andersen M.R."/>
            <person name="Bendtsen J.D."/>
            <person name="Benen J.A.E."/>
            <person name="van den Berg M."/>
            <person name="Breestraat S."/>
            <person name="Caddick M.X."/>
            <person name="Contreras R."/>
            <person name="Cornell M."/>
            <person name="Coutinho P.M."/>
            <person name="Danchin E.G.J."/>
            <person name="Debets A.J.M."/>
            <person name="Dekker P."/>
            <person name="van Dijck P.W.M."/>
            <person name="van Dijk A."/>
            <person name="Dijkhuizen L."/>
            <person name="Driessen A.J.M."/>
            <person name="d'Enfert C."/>
            <person name="Geysens S."/>
            <person name="Goosen C."/>
            <person name="Groot G.S.P."/>
            <person name="de Groot P.W.J."/>
            <person name="Guillemette T."/>
            <person name="Henrissat B."/>
            <person name="Herweijer M."/>
            <person name="van den Hombergh J.P.T.W."/>
            <person name="van den Hondel C.A.M.J.J."/>
            <person name="van der Heijden R.T.J.M."/>
            <person name="van der Kaaij R.M."/>
            <person name="Klis F.M."/>
            <person name="Kools H.J."/>
            <person name="Kubicek C.P."/>
            <person name="van Kuyk P.A."/>
            <person name="Lauber J."/>
            <person name="Lu X."/>
            <person name="van der Maarel M.J.E.C."/>
            <person name="Meulenberg R."/>
            <person name="Menke H."/>
            <person name="Mortimer M.A."/>
            <person name="Nielsen J."/>
            <person name="Oliver S.G."/>
            <person name="Olsthoorn M."/>
            <person name="Pal K."/>
            <person name="van Peij N.N.M.E."/>
            <person name="Ram A.F.J."/>
            <person name="Rinas U."/>
            <person name="Roubos J.A."/>
            <person name="Sagt C.M.J."/>
            <person name="Schmoll M."/>
            <person name="Sun J."/>
            <person name="Ussery D."/>
            <person name="Varga J."/>
            <person name="Vervecken W."/>
            <person name="van de Vondervoort P.J.J."/>
            <person name="Wedler H."/>
            <person name="Woesten H.A.B."/>
            <person name="Zeng A.-P."/>
            <person name="van Ooyen A.J.J."/>
            <person name="Visser J."/>
            <person name="Stam H."/>
        </authorList>
    </citation>
    <scope>NUCLEOTIDE SEQUENCE [LARGE SCALE GENOMIC DNA]</scope>
    <source>
        <strain>ATCC MYA-4892 / CBS 513.88 / FGSC A1513</strain>
    </source>
</reference>
<comment type="function">
    <text evidence="1">Beta-glucosidases are one of a number of cellulolytic enzymes involved in the degradation of cellulosic biomass. Catalyzes the last step releasing glucose from the inhibitory cellobiose (By similarity).</text>
</comment>
<comment type="catalytic activity">
    <reaction>
        <text>Hydrolysis of terminal, non-reducing beta-D-glucosyl residues with release of beta-D-glucose.</text>
        <dbReference type="EC" id="3.2.1.21"/>
    </reaction>
</comment>
<comment type="pathway">
    <text>Glycan metabolism; cellulose degradation.</text>
</comment>
<comment type="subcellular location">
    <subcellularLocation>
        <location evidence="1">Secreted</location>
    </subcellularLocation>
</comment>
<comment type="similarity">
    <text evidence="3">Belongs to the glycosyl hydrolase 3 family.</text>
</comment>
<organism>
    <name type="scientific">Aspergillus niger (strain ATCC MYA-4892 / CBS 513.88 / FGSC A1513)</name>
    <dbReference type="NCBI Taxonomy" id="425011"/>
    <lineage>
        <taxon>Eukaryota</taxon>
        <taxon>Fungi</taxon>
        <taxon>Dikarya</taxon>
        <taxon>Ascomycota</taxon>
        <taxon>Pezizomycotina</taxon>
        <taxon>Eurotiomycetes</taxon>
        <taxon>Eurotiomycetidae</taxon>
        <taxon>Eurotiales</taxon>
        <taxon>Aspergillaceae</taxon>
        <taxon>Aspergillus</taxon>
        <taxon>Aspergillus subgen. Circumdati</taxon>
    </lineage>
</organism>
<keyword id="KW-0119">Carbohydrate metabolism</keyword>
<keyword id="KW-0136">Cellulose degradation</keyword>
<keyword id="KW-0325">Glycoprotein</keyword>
<keyword id="KW-0326">Glycosidase</keyword>
<keyword id="KW-0378">Hydrolase</keyword>
<keyword id="KW-0624">Polysaccharide degradation</keyword>
<keyword id="KW-1185">Reference proteome</keyword>
<keyword id="KW-0964">Secreted</keyword>
<keyword id="KW-0732">Signal</keyword>
<name>BGLM_ASPNC</name>
<protein>
    <recommendedName>
        <fullName>Probable beta-glucosidase M</fullName>
        <ecNumber>3.2.1.21</ecNumber>
    </recommendedName>
    <alternativeName>
        <fullName>Beta-D-glucoside glucohydrolase M</fullName>
    </alternativeName>
    <alternativeName>
        <fullName>Cellobiase M</fullName>
    </alternativeName>
    <alternativeName>
        <fullName>Gentiobiase M</fullName>
    </alternativeName>
</protein>
<evidence type="ECO:0000250" key="1"/>
<evidence type="ECO:0000255" key="2"/>
<evidence type="ECO:0000305" key="3"/>
<proteinExistence type="inferred from homology"/>
<accession>A5ABF5</accession>
<feature type="signal peptide" evidence="2">
    <location>
        <begin position="1"/>
        <end position="19"/>
    </location>
</feature>
<feature type="chain" id="PRO_5000242398" description="Probable beta-glucosidase M">
    <location>
        <begin position="20"/>
        <end position="765"/>
    </location>
</feature>
<feature type="active site" evidence="1">
    <location>
        <position position="286"/>
    </location>
</feature>
<feature type="glycosylation site" description="N-linked (GlcNAc...) asparagine" evidence="2">
    <location>
        <position position="24"/>
    </location>
</feature>
<feature type="glycosylation site" description="N-linked (GlcNAc...) asparagine" evidence="2">
    <location>
        <position position="71"/>
    </location>
</feature>
<feature type="glycosylation site" description="N-linked (GlcNAc...) asparagine" evidence="2">
    <location>
        <position position="93"/>
    </location>
</feature>
<feature type="glycosylation site" description="N-linked (GlcNAc...) asparagine" evidence="2">
    <location>
        <position position="126"/>
    </location>
</feature>
<feature type="glycosylation site" description="N-linked (GlcNAc...) asparagine" evidence="2">
    <location>
        <position position="258"/>
    </location>
</feature>
<feature type="glycosylation site" description="N-linked (GlcNAc...) asparagine" evidence="2">
    <location>
        <position position="314"/>
    </location>
</feature>
<feature type="glycosylation site" description="N-linked (GlcNAc...) asparagine" evidence="2">
    <location>
        <position position="321"/>
    </location>
</feature>
<feature type="glycosylation site" description="N-linked (GlcNAc...) asparagine" evidence="2">
    <location>
        <position position="432"/>
    </location>
</feature>
<feature type="glycosylation site" description="N-linked (GlcNAc...) asparagine" evidence="2">
    <location>
        <position position="519"/>
    </location>
</feature>
<feature type="glycosylation site" description="N-linked (GlcNAc...) asparagine" evidence="2">
    <location>
        <position position="541"/>
    </location>
</feature>
<feature type="glycosylation site" description="N-linked (GlcNAc...) asparagine" evidence="2">
    <location>
        <position position="647"/>
    </location>
</feature>
<dbReference type="EC" id="3.2.1.21"/>
<dbReference type="EMBL" id="AM270218">
    <property type="protein sequence ID" value="CAK48253.1"/>
    <property type="molecule type" value="Genomic_DNA"/>
</dbReference>
<dbReference type="RefSeq" id="XP_001394024.1">
    <property type="nucleotide sequence ID" value="XM_001393987.1"/>
</dbReference>
<dbReference type="SMR" id="A5ABF5"/>
<dbReference type="CAZy" id="GH3">
    <property type="family name" value="Glycoside Hydrolase Family 3"/>
</dbReference>
<dbReference type="GlyCosmos" id="A5ABF5">
    <property type="glycosylation" value="11 sites, No reported glycans"/>
</dbReference>
<dbReference type="EnsemblFungi" id="CAK48253">
    <property type="protein sequence ID" value="CAK48253"/>
    <property type="gene ID" value="An11g00200"/>
</dbReference>
<dbReference type="GeneID" id="4984238"/>
<dbReference type="KEGG" id="ang:An11g00200"/>
<dbReference type="VEuPathDB" id="FungiDB:An11g00200"/>
<dbReference type="HOGENOM" id="CLU_004542_2_1_1"/>
<dbReference type="UniPathway" id="UPA00696"/>
<dbReference type="Proteomes" id="UP000006706">
    <property type="component" value="Chromosome 7R"/>
</dbReference>
<dbReference type="GO" id="GO:0005576">
    <property type="term" value="C:extracellular region"/>
    <property type="evidence" value="ECO:0007669"/>
    <property type="project" value="UniProtKB-SubCell"/>
</dbReference>
<dbReference type="GO" id="GO:0008422">
    <property type="term" value="F:beta-glucosidase activity"/>
    <property type="evidence" value="ECO:0007669"/>
    <property type="project" value="UniProtKB-EC"/>
</dbReference>
<dbReference type="GO" id="GO:0030245">
    <property type="term" value="P:cellulose catabolic process"/>
    <property type="evidence" value="ECO:0007669"/>
    <property type="project" value="UniProtKB-UniPathway"/>
</dbReference>
<dbReference type="FunFam" id="2.60.40.10:FF:000757">
    <property type="entry name" value="Beta-glucosidase G"/>
    <property type="match status" value="1"/>
</dbReference>
<dbReference type="FunFam" id="3.20.20.300:FF:000002">
    <property type="entry name" value="Probable beta-glucosidase"/>
    <property type="match status" value="1"/>
</dbReference>
<dbReference type="Gene3D" id="3.40.50.1700">
    <property type="entry name" value="Glycoside hydrolase family 3 C-terminal domain"/>
    <property type="match status" value="1"/>
</dbReference>
<dbReference type="Gene3D" id="3.20.20.300">
    <property type="entry name" value="Glycoside hydrolase, family 3, N-terminal domain"/>
    <property type="match status" value="1"/>
</dbReference>
<dbReference type="Gene3D" id="2.60.40.10">
    <property type="entry name" value="Immunoglobulins"/>
    <property type="match status" value="1"/>
</dbReference>
<dbReference type="InterPro" id="IPR050288">
    <property type="entry name" value="Cellulose_deg_GH3"/>
</dbReference>
<dbReference type="InterPro" id="IPR026891">
    <property type="entry name" value="Fn3-like"/>
</dbReference>
<dbReference type="InterPro" id="IPR002772">
    <property type="entry name" value="Glyco_hydro_3_C"/>
</dbReference>
<dbReference type="InterPro" id="IPR036881">
    <property type="entry name" value="Glyco_hydro_3_C_sf"/>
</dbReference>
<dbReference type="InterPro" id="IPR001764">
    <property type="entry name" value="Glyco_hydro_3_N"/>
</dbReference>
<dbReference type="InterPro" id="IPR036962">
    <property type="entry name" value="Glyco_hydro_3_N_sf"/>
</dbReference>
<dbReference type="InterPro" id="IPR017853">
    <property type="entry name" value="Glycoside_hydrolase_SF"/>
</dbReference>
<dbReference type="InterPro" id="IPR013783">
    <property type="entry name" value="Ig-like_fold"/>
</dbReference>
<dbReference type="PANTHER" id="PTHR42715">
    <property type="entry name" value="BETA-GLUCOSIDASE"/>
    <property type="match status" value="1"/>
</dbReference>
<dbReference type="PANTHER" id="PTHR42715:SF5">
    <property type="entry name" value="BETA-GLUCOSIDASE M-RELATED"/>
    <property type="match status" value="1"/>
</dbReference>
<dbReference type="Pfam" id="PF14310">
    <property type="entry name" value="Fn3-like"/>
    <property type="match status" value="1"/>
</dbReference>
<dbReference type="Pfam" id="PF00933">
    <property type="entry name" value="Glyco_hydro_3"/>
    <property type="match status" value="1"/>
</dbReference>
<dbReference type="Pfam" id="PF01915">
    <property type="entry name" value="Glyco_hydro_3_C"/>
    <property type="match status" value="1"/>
</dbReference>
<dbReference type="PRINTS" id="PR00133">
    <property type="entry name" value="GLHYDRLASE3"/>
</dbReference>
<dbReference type="SMART" id="SM01217">
    <property type="entry name" value="Fn3_like"/>
    <property type="match status" value="1"/>
</dbReference>
<dbReference type="SUPFAM" id="SSF51445">
    <property type="entry name" value="(Trans)glycosidases"/>
    <property type="match status" value="1"/>
</dbReference>
<dbReference type="SUPFAM" id="SSF52279">
    <property type="entry name" value="Beta-D-glucan exohydrolase, C-terminal domain"/>
    <property type="match status" value="1"/>
</dbReference>
<gene>
    <name type="primary">bglM</name>
    <name type="ORF">An11g00200</name>
</gene>
<sequence>MHSISALLSLLGGLALSSAAPTQNITSDAYFYGQSPAVYPSPEGTGTGSWASAYEKAKAFVAQLTDDEKVNLTAGVSSKTGCSGFIAEIPRLNFTGLCVSDASNGLRGTDYVNGWSSGIHVGASWNRTLARDRAKYMGQEFHRKGVNLLLGPVVGPLGRVAEGGRNWEGFSNDPYLTGALVYETVQGVQSSGVGVSTKHYIGNEQETNRNPETVNGVDVASVSSNIDDKTIHELYLWPFQDAVLAGSVAIMCSYERINNSYACQNSKTLNGLLKTELGFQGYVITDWGAQHGGIASANAGLDMVMPETTLWGSNLTTAIANGTMEASRLDDMATRIIATWYQLNQDTDFPTPGVGMPASAQSEHQVVVGTAPDEKSTLLESAIEGHVLVKNTNNALPLQTPQLVSVFGYDAKVTDSFDLASTVLGTSPLFQNYTLWVGGGSGSNSPAYVIAPLNAIQQQAYEDGTSVLWDVSAQDPEVDPTSEACLVFINSFATEGYDRSALTDDYSDTLVTNVASKCNNTIVVVHNAGIRLVYNWIDHENVTAVVLAHLPGQDTGHALVDILYGRANPSGKLPYTIAKQASDYGSLLHPSEPQTPYGLFPQSDFSEGVYIDYRAFDKDNITPQFEFGFGLSYTTFAYSGLSIEKTNETTSEYPPSAAIQEGGNPRLWDDLVTVTAEVQNSGSVDGAEVAQLYVGIPNGPVRQLRGFDKVLLSAGETAQVSFSLNRRDLSTWNVEAQQWQLQSGTYQVYVGRSSRDLPLTGEFSI</sequence>